<accession>B5YDW6</accession>
<organism>
    <name type="scientific">Dictyoglomus thermophilum (strain ATCC 35947 / DSM 3960 / H-6-12)</name>
    <dbReference type="NCBI Taxonomy" id="309799"/>
    <lineage>
        <taxon>Bacteria</taxon>
        <taxon>Pseudomonadati</taxon>
        <taxon>Dictyoglomota</taxon>
        <taxon>Dictyoglomia</taxon>
        <taxon>Dictyoglomales</taxon>
        <taxon>Dictyoglomaceae</taxon>
        <taxon>Dictyoglomus</taxon>
    </lineage>
</organism>
<comment type="similarity">
    <text evidence="1">Belongs to the bacterial ribosomal protein bL36 family.</text>
</comment>
<feature type="chain" id="PRO_1000101025" description="Large ribosomal subunit protein bL36">
    <location>
        <begin position="1"/>
        <end position="37"/>
    </location>
</feature>
<sequence>MKVRSSVKKICEKCKIVRRGGRVFVICENPRHKQKQG</sequence>
<gene>
    <name evidence="1" type="primary">rpmJ</name>
    <name type="ordered locus">DICTH_0860</name>
</gene>
<proteinExistence type="inferred from homology"/>
<dbReference type="EMBL" id="CP001146">
    <property type="protein sequence ID" value="ACI19969.1"/>
    <property type="molecule type" value="Genomic_DNA"/>
</dbReference>
<dbReference type="RefSeq" id="WP_012548601.1">
    <property type="nucleotide sequence ID" value="NC_011297.1"/>
</dbReference>
<dbReference type="SMR" id="B5YDW6"/>
<dbReference type="STRING" id="309799.DICTH_0860"/>
<dbReference type="PaxDb" id="309799-DICTH_0860"/>
<dbReference type="KEGG" id="dth:DICTH_0860"/>
<dbReference type="eggNOG" id="COG0257">
    <property type="taxonomic scope" value="Bacteria"/>
</dbReference>
<dbReference type="HOGENOM" id="CLU_135723_6_2_0"/>
<dbReference type="OrthoDB" id="9802520at2"/>
<dbReference type="Proteomes" id="UP000001733">
    <property type="component" value="Chromosome"/>
</dbReference>
<dbReference type="GO" id="GO:0005737">
    <property type="term" value="C:cytoplasm"/>
    <property type="evidence" value="ECO:0007669"/>
    <property type="project" value="UniProtKB-ARBA"/>
</dbReference>
<dbReference type="GO" id="GO:1990904">
    <property type="term" value="C:ribonucleoprotein complex"/>
    <property type="evidence" value="ECO:0007669"/>
    <property type="project" value="UniProtKB-KW"/>
</dbReference>
<dbReference type="GO" id="GO:0005840">
    <property type="term" value="C:ribosome"/>
    <property type="evidence" value="ECO:0007669"/>
    <property type="project" value="UniProtKB-KW"/>
</dbReference>
<dbReference type="GO" id="GO:0003735">
    <property type="term" value="F:structural constituent of ribosome"/>
    <property type="evidence" value="ECO:0007669"/>
    <property type="project" value="InterPro"/>
</dbReference>
<dbReference type="GO" id="GO:0006412">
    <property type="term" value="P:translation"/>
    <property type="evidence" value="ECO:0007669"/>
    <property type="project" value="UniProtKB-UniRule"/>
</dbReference>
<dbReference type="HAMAP" id="MF_00251">
    <property type="entry name" value="Ribosomal_bL36"/>
    <property type="match status" value="1"/>
</dbReference>
<dbReference type="InterPro" id="IPR000473">
    <property type="entry name" value="Ribosomal_bL36"/>
</dbReference>
<dbReference type="InterPro" id="IPR035977">
    <property type="entry name" value="Ribosomal_bL36_sp"/>
</dbReference>
<dbReference type="NCBIfam" id="TIGR01022">
    <property type="entry name" value="rpmJ_bact"/>
    <property type="match status" value="1"/>
</dbReference>
<dbReference type="PANTHER" id="PTHR42888">
    <property type="entry name" value="50S RIBOSOMAL PROTEIN L36, CHLOROPLASTIC"/>
    <property type="match status" value="1"/>
</dbReference>
<dbReference type="PANTHER" id="PTHR42888:SF1">
    <property type="entry name" value="LARGE RIBOSOMAL SUBUNIT PROTEIN BL36C"/>
    <property type="match status" value="1"/>
</dbReference>
<dbReference type="Pfam" id="PF00444">
    <property type="entry name" value="Ribosomal_L36"/>
    <property type="match status" value="1"/>
</dbReference>
<dbReference type="SUPFAM" id="SSF57840">
    <property type="entry name" value="Ribosomal protein L36"/>
    <property type="match status" value="1"/>
</dbReference>
<dbReference type="PROSITE" id="PS00828">
    <property type="entry name" value="RIBOSOMAL_L36"/>
    <property type="match status" value="1"/>
</dbReference>
<reference key="1">
    <citation type="journal article" date="2014" name="Genome Announc.">
        <title>Complete Genome Sequence of the Extreme Thermophile Dictyoglomus thermophilum H-6-12.</title>
        <authorList>
            <person name="Coil D.A."/>
            <person name="Badger J.H."/>
            <person name="Forberger H.C."/>
            <person name="Riggs F."/>
            <person name="Madupu R."/>
            <person name="Fedorova N."/>
            <person name="Ward N."/>
            <person name="Robb F.T."/>
            <person name="Eisen J.A."/>
        </authorList>
    </citation>
    <scope>NUCLEOTIDE SEQUENCE [LARGE SCALE GENOMIC DNA]</scope>
    <source>
        <strain>ATCC 35947 / DSM 3960 / H-6-12</strain>
    </source>
</reference>
<evidence type="ECO:0000255" key="1">
    <source>
        <dbReference type="HAMAP-Rule" id="MF_00251"/>
    </source>
</evidence>
<evidence type="ECO:0000305" key="2"/>
<keyword id="KW-0687">Ribonucleoprotein</keyword>
<keyword id="KW-0689">Ribosomal protein</keyword>
<name>RL36_DICT6</name>
<protein>
    <recommendedName>
        <fullName evidence="1">Large ribosomal subunit protein bL36</fullName>
    </recommendedName>
    <alternativeName>
        <fullName evidence="2">50S ribosomal protein L36</fullName>
    </alternativeName>
</protein>